<dbReference type="EMBL" id="CP000013">
    <property type="protein sequence ID" value="AAU06980.1"/>
    <property type="molecule type" value="Genomic_DNA"/>
</dbReference>
<dbReference type="RefSeq" id="WP_011193473.1">
    <property type="nucleotide sequence ID" value="NZ_CP028872.1"/>
</dbReference>
<dbReference type="SMR" id="Q662P1"/>
<dbReference type="GeneID" id="45160917"/>
<dbReference type="KEGG" id="bga:BG0122"/>
<dbReference type="eggNOG" id="COG0233">
    <property type="taxonomic scope" value="Bacteria"/>
</dbReference>
<dbReference type="HOGENOM" id="CLU_073981_2_0_12"/>
<dbReference type="OrthoDB" id="9804006at2"/>
<dbReference type="Proteomes" id="UP000002276">
    <property type="component" value="Chromosome"/>
</dbReference>
<dbReference type="GO" id="GO:0005737">
    <property type="term" value="C:cytoplasm"/>
    <property type="evidence" value="ECO:0007669"/>
    <property type="project" value="UniProtKB-SubCell"/>
</dbReference>
<dbReference type="GO" id="GO:0043023">
    <property type="term" value="F:ribosomal large subunit binding"/>
    <property type="evidence" value="ECO:0007669"/>
    <property type="project" value="TreeGrafter"/>
</dbReference>
<dbReference type="GO" id="GO:0006415">
    <property type="term" value="P:translational termination"/>
    <property type="evidence" value="ECO:0007669"/>
    <property type="project" value="UniProtKB-UniRule"/>
</dbReference>
<dbReference type="CDD" id="cd00520">
    <property type="entry name" value="RRF"/>
    <property type="match status" value="1"/>
</dbReference>
<dbReference type="FunFam" id="1.10.132.20:FF:000001">
    <property type="entry name" value="Ribosome-recycling factor"/>
    <property type="match status" value="1"/>
</dbReference>
<dbReference type="FunFam" id="3.30.1360.40:FF:000001">
    <property type="entry name" value="Ribosome-recycling factor"/>
    <property type="match status" value="1"/>
</dbReference>
<dbReference type="Gene3D" id="3.30.1360.40">
    <property type="match status" value="1"/>
</dbReference>
<dbReference type="Gene3D" id="1.10.132.20">
    <property type="entry name" value="Ribosome-recycling factor"/>
    <property type="match status" value="1"/>
</dbReference>
<dbReference type="HAMAP" id="MF_00040">
    <property type="entry name" value="RRF"/>
    <property type="match status" value="1"/>
</dbReference>
<dbReference type="InterPro" id="IPR002661">
    <property type="entry name" value="Ribosome_recyc_fac"/>
</dbReference>
<dbReference type="InterPro" id="IPR023584">
    <property type="entry name" value="Ribosome_recyc_fac_dom"/>
</dbReference>
<dbReference type="InterPro" id="IPR036191">
    <property type="entry name" value="RRF_sf"/>
</dbReference>
<dbReference type="NCBIfam" id="TIGR00496">
    <property type="entry name" value="frr"/>
    <property type="match status" value="1"/>
</dbReference>
<dbReference type="PANTHER" id="PTHR20982:SF3">
    <property type="entry name" value="MITOCHONDRIAL RIBOSOME RECYCLING FACTOR PSEUDO 1"/>
    <property type="match status" value="1"/>
</dbReference>
<dbReference type="PANTHER" id="PTHR20982">
    <property type="entry name" value="RIBOSOME RECYCLING FACTOR"/>
    <property type="match status" value="1"/>
</dbReference>
<dbReference type="Pfam" id="PF01765">
    <property type="entry name" value="RRF"/>
    <property type="match status" value="1"/>
</dbReference>
<dbReference type="SUPFAM" id="SSF55194">
    <property type="entry name" value="Ribosome recycling factor, RRF"/>
    <property type="match status" value="1"/>
</dbReference>
<protein>
    <recommendedName>
        <fullName evidence="1">Ribosome-recycling factor</fullName>
        <shortName evidence="1">RRF</shortName>
    </recommendedName>
    <alternativeName>
        <fullName evidence="1">Ribosome-releasing factor</fullName>
    </alternativeName>
</protein>
<reference key="1">
    <citation type="journal article" date="2004" name="Nucleic Acids Res.">
        <title>Comparative analysis of the Borrelia garinii genome.</title>
        <authorList>
            <person name="Gloeckner G."/>
            <person name="Lehmann R."/>
            <person name="Romualdi A."/>
            <person name="Pradella S."/>
            <person name="Schulte-Spechtel U."/>
            <person name="Schilhabel M."/>
            <person name="Wilske B."/>
            <person name="Suehnel J."/>
            <person name="Platzer M."/>
        </authorList>
    </citation>
    <scope>NUCLEOTIDE SEQUENCE [LARGE SCALE GENOMIC DNA]</scope>
    <source>
        <strain>ATCC BAA-2496 / DSM 23469 / PBi</strain>
    </source>
</reference>
<comment type="function">
    <text evidence="1">Responsible for the release of ribosomes from messenger RNA at the termination of protein biosynthesis. May increase the efficiency of translation by recycling ribosomes from one round of translation to another.</text>
</comment>
<comment type="subcellular location">
    <subcellularLocation>
        <location evidence="1">Cytoplasm</location>
    </subcellularLocation>
</comment>
<comment type="similarity">
    <text evidence="1">Belongs to the RRF family.</text>
</comment>
<name>RRF_BORGP</name>
<feature type="chain" id="PRO_0000167421" description="Ribosome-recycling factor">
    <location>
        <begin position="1"/>
        <end position="184"/>
    </location>
</feature>
<sequence>MEDYKAFLDEKMSKVLLSLDNEYKTLRTGRISSNVFDKIFIQYHGQKTPITQVSSIRIPEARLVVIQPWDKTILNKIEQAILNSDLSMNPSSDGSVIRIKVPALTSERRQDIVKHAKKIAEEHKVSTRNIRQDLNNKVKKQEKESEITEDSLKRILDDIQKSIDIYIKRIDTILESKIQEIMEV</sequence>
<keyword id="KW-0963">Cytoplasm</keyword>
<keyword id="KW-0648">Protein biosynthesis</keyword>
<gene>
    <name evidence="1" type="primary">frr</name>
    <name type="ordered locus">BG0122</name>
</gene>
<accession>Q662P1</accession>
<organism>
    <name type="scientific">Borrelia garinii subsp. bavariensis (strain ATCC BAA-2496 / DSM 23469 / PBi)</name>
    <name type="common">Borreliella bavariensis</name>
    <dbReference type="NCBI Taxonomy" id="290434"/>
    <lineage>
        <taxon>Bacteria</taxon>
        <taxon>Pseudomonadati</taxon>
        <taxon>Spirochaetota</taxon>
        <taxon>Spirochaetia</taxon>
        <taxon>Spirochaetales</taxon>
        <taxon>Borreliaceae</taxon>
        <taxon>Borreliella</taxon>
    </lineage>
</organism>
<evidence type="ECO:0000255" key="1">
    <source>
        <dbReference type="HAMAP-Rule" id="MF_00040"/>
    </source>
</evidence>
<proteinExistence type="inferred from homology"/>